<feature type="chain" id="PRO_0000378979" description="WD repeat-containing protein 48 homolog">
    <location>
        <begin position="1"/>
        <end position="680"/>
    </location>
</feature>
<feature type="repeat" description="WD 1" evidence="4">
    <location>
        <begin position="26"/>
        <end position="65"/>
    </location>
</feature>
<feature type="repeat" description="WD 2" evidence="4">
    <location>
        <begin position="71"/>
        <end position="110"/>
    </location>
</feature>
<feature type="repeat" description="WD 3" evidence="4">
    <location>
        <begin position="113"/>
        <end position="152"/>
    </location>
</feature>
<feature type="repeat" description="WD 4" evidence="4">
    <location>
        <begin position="164"/>
        <end position="203"/>
    </location>
</feature>
<feature type="repeat" description="WD 5" evidence="4">
    <location>
        <begin position="206"/>
        <end position="245"/>
    </location>
</feature>
<feature type="repeat" description="WD 6" evidence="4">
    <location>
        <begin position="248"/>
        <end position="287"/>
    </location>
</feature>
<feature type="repeat" description="WD 7" evidence="4">
    <location>
        <begin position="290"/>
        <end position="329"/>
    </location>
</feature>
<feature type="repeat" description="WD 8" evidence="4">
    <location>
        <begin position="350"/>
        <end position="389"/>
    </location>
</feature>
<feature type="region of interest" description="Disordered" evidence="5">
    <location>
        <begin position="592"/>
        <end position="616"/>
    </location>
</feature>
<protein>
    <recommendedName>
        <fullName>WD repeat-containing protein 48 homolog</fullName>
    </recommendedName>
</protein>
<organism evidence="7">
    <name type="scientific">Drosophila erecta</name>
    <name type="common">Fruit fly</name>
    <dbReference type="NCBI Taxonomy" id="7220"/>
    <lineage>
        <taxon>Eukaryota</taxon>
        <taxon>Metazoa</taxon>
        <taxon>Ecdysozoa</taxon>
        <taxon>Arthropoda</taxon>
        <taxon>Hexapoda</taxon>
        <taxon>Insecta</taxon>
        <taxon>Pterygota</taxon>
        <taxon>Neoptera</taxon>
        <taxon>Endopterygota</taxon>
        <taxon>Diptera</taxon>
        <taxon>Brachycera</taxon>
        <taxon>Muscomorpha</taxon>
        <taxon>Ephydroidea</taxon>
        <taxon>Drosophilidae</taxon>
        <taxon>Drosophila</taxon>
        <taxon>Sophophora</taxon>
    </lineage>
</organism>
<accession>B3NSK1</accession>
<evidence type="ECO:0000250" key="1"/>
<evidence type="ECO:0000250" key="2">
    <source>
        <dbReference type="UniProtKB" id="Q1LZ08"/>
    </source>
</evidence>
<evidence type="ECO:0000250" key="3">
    <source>
        <dbReference type="UniProtKB" id="Q8TAF3"/>
    </source>
</evidence>
<evidence type="ECO:0000255" key="4"/>
<evidence type="ECO:0000256" key="5">
    <source>
        <dbReference type="SAM" id="MobiDB-lite"/>
    </source>
</evidence>
<evidence type="ECO:0000305" key="6"/>
<evidence type="ECO:0000312" key="7">
    <source>
        <dbReference type="Proteomes" id="UP000008711"/>
    </source>
</evidence>
<sequence>MLTHKTCQARKKMQVSFVIRDAEEKQHRNGVNALQLDANNGKLYSAGRDAIIRVWNTRTDSSEKYIQSMEHHNDWVNDIVLCCNGRNLISASCDTTVKVWNAQKGFCMSTLRTHRDYVQALAYAKDREQVASAGLDKAIFLWDVNTLTALTASNNTVTTSSLTGSKDSIYSLAMNPSGTVIVSGSTENILRIWDPRTCMRSMKLRGHTENVRCLVVSPDGNQVVSGSSDGTIKVWNLGQQRCVQTIHVHKEGVWSLLMSENFQYIISGSRDRNIIVTEMRNPSNKTLVCEEQAPVLSLGYNIDKTGVWATTWNSDIRCWKLPMYDRCTMNSSGGMDAQWTQGGTEVACIKGGAAIKECAVLNDKRYIITKDSQDQVVVYDVLRVVKKEQLGAVDYEAEVKKRNKQVYIPNWFTVDLKTGMPTIVLGQEEVDCFSAWVSIEAGLPECVDPTTEIKINYGKLLLEALLEYWTPPHSIPPNEMEPDMHGNGYFQVPKHTPVIFSEVGGRTVCRLLVRDAAGDSESTLLHETAPQWVTDVVIEKNIPKFLKIPFFLQPHPQMTKPERTKKDRLVANEFIQCRKVCEHVLEKVLNAETTPSGGNANNSLQNSQSDANSEGSQLPAEERIELWCNDVVVDPNMDLRTVRHFIWKQSTDLTFQYKTKQNFNYDGSIGDSLERVTRKY</sequence>
<keyword id="KW-0677">Repeat</keyword>
<keyword id="KW-0833">Ubl conjugation pathway</keyword>
<keyword id="KW-0853">WD repeat</keyword>
<gene>
    <name evidence="2" type="primary">Uaf1</name>
    <name type="ORF">GG22678</name>
</gene>
<comment type="function">
    <text evidence="1 2 3">Regulatory component of the Usp12-46 deubiquitylase complex (By similarity). activates deubiquitination by increasing the catalytic turnover without increasing the affinity of deubiquitinating enzymes for the substrate (By similarity). The complex deubiquitylates the wg/wingless-signaling receptor arr/arrow, which stabilizes the receptor and increases its concentration at the cell surface; this enhances the sensitivity of cells to wg/wingless-signal stimulation. This increases the amplitude and spatial range of the signaling response to the wg/wingless morphogen gradient, facilitating the precise concentration-dependent regulation of its target genes. Together with Wdr20 and Usp12-46 required for wg/wingless-mediated signaling in the wing imaginal disc and for wg/wingless-dependent regulation of intestinal stem cell proliferation (By similarity).</text>
</comment>
<comment type="subunit">
    <text evidence="2">Catalytic component of the Usp12-46 deubiquitylase complex consisting of Usp12-46, Wdr20 and Uaf1; regulatory subunit that, together wtih Wdr20, stabilizes Usp12-46. The Usp12-46 deubiquitylase complex associates with arr/arrow; the interaction leads to deubiquitination and stabilization of arr/arrow.</text>
</comment>
<comment type="similarity">
    <text evidence="6">Belongs to the WD repeat WDR48 family.</text>
</comment>
<name>WDR48_DROER</name>
<dbReference type="EMBL" id="CH954179">
    <property type="protein sequence ID" value="EDV56503.1"/>
    <property type="molecule type" value="Genomic_DNA"/>
</dbReference>
<dbReference type="RefSeq" id="XP_001976103.1">
    <property type="nucleotide sequence ID" value="XM_001976067.2"/>
</dbReference>
<dbReference type="SMR" id="B3NSK1"/>
<dbReference type="EnsemblMetazoa" id="FBtr0142732">
    <property type="protein sequence ID" value="FBpp0141224"/>
    <property type="gene ID" value="FBgn0114843"/>
</dbReference>
<dbReference type="EnsemblMetazoa" id="XM_026981332.1">
    <property type="protein sequence ID" value="XP_026837133.1"/>
    <property type="gene ID" value="LOC6547112"/>
</dbReference>
<dbReference type="eggNOG" id="KOG0308">
    <property type="taxonomic scope" value="Eukaryota"/>
</dbReference>
<dbReference type="HOGENOM" id="CLU_014960_0_1_1"/>
<dbReference type="OMA" id="IRHYHIL"/>
<dbReference type="OrthoDB" id="2421129at2759"/>
<dbReference type="PhylomeDB" id="B3NSK1"/>
<dbReference type="Proteomes" id="UP000008711">
    <property type="component" value="Unassembled WGS sequence"/>
</dbReference>
<dbReference type="GO" id="GO:0043130">
    <property type="term" value="F:ubiquitin binding"/>
    <property type="evidence" value="ECO:0007669"/>
    <property type="project" value="TreeGrafter"/>
</dbReference>
<dbReference type="GO" id="GO:0000724">
    <property type="term" value="P:double-strand break repair via homologous recombination"/>
    <property type="evidence" value="ECO:0007669"/>
    <property type="project" value="TreeGrafter"/>
</dbReference>
<dbReference type="CDD" id="cd17041">
    <property type="entry name" value="Ubl_WDR48"/>
    <property type="match status" value="1"/>
</dbReference>
<dbReference type="CDD" id="cd00200">
    <property type="entry name" value="WD40"/>
    <property type="match status" value="1"/>
</dbReference>
<dbReference type="FunFam" id="2.130.10.10:FF:000543">
    <property type="entry name" value="WD repeat-containing protein 48 homolog"/>
    <property type="match status" value="1"/>
</dbReference>
<dbReference type="FunFam" id="2.130.10.10:FF:000984">
    <property type="entry name" value="WD repeat-containing protein 48 homolog"/>
    <property type="match status" value="1"/>
</dbReference>
<dbReference type="Gene3D" id="2.130.10.10">
    <property type="entry name" value="YVTN repeat-like/Quinoprotein amine dehydrogenase"/>
    <property type="match status" value="2"/>
</dbReference>
<dbReference type="InterPro" id="IPR020472">
    <property type="entry name" value="G-protein_beta_WD-40_rep"/>
</dbReference>
<dbReference type="InterPro" id="IPR015943">
    <property type="entry name" value="WD40/YVTN_repeat-like_dom_sf"/>
</dbReference>
<dbReference type="InterPro" id="IPR019775">
    <property type="entry name" value="WD40_repeat_CS"/>
</dbReference>
<dbReference type="InterPro" id="IPR036322">
    <property type="entry name" value="WD40_repeat_dom_sf"/>
</dbReference>
<dbReference type="InterPro" id="IPR001680">
    <property type="entry name" value="WD40_rpt"/>
</dbReference>
<dbReference type="InterPro" id="IPR051246">
    <property type="entry name" value="WDR48"/>
</dbReference>
<dbReference type="InterPro" id="IPR021772">
    <property type="entry name" value="WDR48/Bun107"/>
</dbReference>
<dbReference type="PANTHER" id="PTHR19862">
    <property type="entry name" value="WD REPEAT-CONTAINING PROTEIN 48"/>
    <property type="match status" value="1"/>
</dbReference>
<dbReference type="PANTHER" id="PTHR19862:SF14">
    <property type="entry name" value="WD REPEAT-CONTAINING PROTEIN 48"/>
    <property type="match status" value="1"/>
</dbReference>
<dbReference type="Pfam" id="PF11816">
    <property type="entry name" value="DUF3337"/>
    <property type="match status" value="1"/>
</dbReference>
<dbReference type="Pfam" id="PF00400">
    <property type="entry name" value="WD40"/>
    <property type="match status" value="6"/>
</dbReference>
<dbReference type="PRINTS" id="PR00320">
    <property type="entry name" value="GPROTEINBRPT"/>
</dbReference>
<dbReference type="SMART" id="SM00320">
    <property type="entry name" value="WD40"/>
    <property type="match status" value="8"/>
</dbReference>
<dbReference type="SUPFAM" id="SSF50978">
    <property type="entry name" value="WD40 repeat-like"/>
    <property type="match status" value="1"/>
</dbReference>
<dbReference type="PROSITE" id="PS00678">
    <property type="entry name" value="WD_REPEATS_1"/>
    <property type="match status" value="4"/>
</dbReference>
<dbReference type="PROSITE" id="PS50082">
    <property type="entry name" value="WD_REPEATS_2"/>
    <property type="match status" value="5"/>
</dbReference>
<dbReference type="PROSITE" id="PS50294">
    <property type="entry name" value="WD_REPEATS_REGION"/>
    <property type="match status" value="5"/>
</dbReference>
<proteinExistence type="inferred from homology"/>
<reference key="1">
    <citation type="journal article" date="2007" name="Nature">
        <title>Evolution of genes and genomes on the Drosophila phylogeny.</title>
        <authorList>
            <consortium name="Drosophila 12 genomes consortium"/>
        </authorList>
    </citation>
    <scope>NUCLEOTIDE SEQUENCE [LARGE SCALE GENOMIC DNA]</scope>
    <source>
        <strain>Tucson 14021-0224.01</strain>
    </source>
</reference>